<feature type="chain" id="PRO_0000127135" description="Achaete-scute complex protein T3">
    <location>
        <begin position="1"/>
        <end position="257"/>
    </location>
</feature>
<feature type="domain" description="bHLH" evidence="1">
    <location>
        <begin position="83"/>
        <end position="145"/>
    </location>
</feature>
<feature type="region of interest" description="Disordered" evidence="2">
    <location>
        <begin position="161"/>
        <end position="221"/>
    </location>
</feature>
<feature type="compositionally biased region" description="Low complexity" evidence="2">
    <location>
        <begin position="165"/>
        <end position="184"/>
    </location>
</feature>
<feature type="compositionally biased region" description="Low complexity" evidence="2">
    <location>
        <begin position="193"/>
        <end position="213"/>
    </location>
</feature>
<feature type="sequence conflict" description="In Ref. 1; CAA31065." evidence="3" ref="1">
    <original>H</original>
    <variation>R</variation>
    <location>
        <position position="198"/>
    </location>
</feature>
<feature type="sequence conflict" description="In Ref. 6; AAM52020." evidence="3" ref="6">
    <original>Q</original>
    <variation>R</variation>
    <location>
        <position position="257"/>
    </location>
</feature>
<dbReference type="EMBL" id="X12549">
    <property type="protein sequence ID" value="CAA31065.1"/>
    <property type="molecule type" value="Genomic_DNA"/>
</dbReference>
<dbReference type="EMBL" id="X71806">
    <property type="protein sequence ID" value="CAA50680.1"/>
    <property type="molecule type" value="mRNA"/>
</dbReference>
<dbReference type="EMBL" id="AE014298">
    <property type="protein sequence ID" value="AAF45500.1"/>
    <property type="molecule type" value="Genomic_DNA"/>
</dbReference>
<dbReference type="EMBL" id="AL024453">
    <property type="protein sequence ID" value="CAA19656.1"/>
    <property type="molecule type" value="Genomic_DNA"/>
</dbReference>
<dbReference type="EMBL" id="AY121693">
    <property type="protein sequence ID" value="AAM52020.1"/>
    <property type="molecule type" value="mRNA"/>
</dbReference>
<dbReference type="PIR" id="S01165">
    <property type="entry name" value="S01165"/>
</dbReference>
<dbReference type="RefSeq" id="NP_476623.1">
    <property type="nucleotide sequence ID" value="NM_057275.5"/>
</dbReference>
<dbReference type="SMR" id="P09774"/>
<dbReference type="BioGRID" id="57556">
    <property type="interactions" value="24"/>
</dbReference>
<dbReference type="FunCoup" id="P09774">
    <property type="interactions" value="6"/>
</dbReference>
<dbReference type="IntAct" id="P09774">
    <property type="interactions" value="12"/>
</dbReference>
<dbReference type="STRING" id="7227.FBpp0070073"/>
<dbReference type="GlyGen" id="P09774">
    <property type="glycosylation" value="1 site"/>
</dbReference>
<dbReference type="PaxDb" id="7227-FBpp0070073"/>
<dbReference type="DNASU" id="30983"/>
<dbReference type="EnsemblMetazoa" id="FBtr0070074">
    <property type="protein sequence ID" value="FBpp0070073"/>
    <property type="gene ID" value="FBgn0002561"/>
</dbReference>
<dbReference type="GeneID" id="30983"/>
<dbReference type="KEGG" id="dme:Dmel_CG3839"/>
<dbReference type="AGR" id="FB:FBgn0002561"/>
<dbReference type="FlyBase" id="FBgn0002561">
    <property type="gene designation" value="l(1)sc"/>
</dbReference>
<dbReference type="VEuPathDB" id="VectorBase:FBgn0002561"/>
<dbReference type="eggNOG" id="KOG4029">
    <property type="taxonomic scope" value="Eukaryota"/>
</dbReference>
<dbReference type="GeneTree" id="ENSGT00940000170891"/>
<dbReference type="HOGENOM" id="CLU_063523_0_0_1"/>
<dbReference type="InParanoid" id="P09774"/>
<dbReference type="OMA" id="NMPYGEQ"/>
<dbReference type="OrthoDB" id="5976910at2759"/>
<dbReference type="PhylomeDB" id="P09774"/>
<dbReference type="SignaLink" id="P09774"/>
<dbReference type="BioGRID-ORCS" id="30983">
    <property type="hits" value="0 hits in 3 CRISPR screens"/>
</dbReference>
<dbReference type="GenomeRNAi" id="30983"/>
<dbReference type="PRO" id="PR:P09774"/>
<dbReference type="Proteomes" id="UP000000803">
    <property type="component" value="Chromosome X"/>
</dbReference>
<dbReference type="Bgee" id="FBgn0002561">
    <property type="expression patterns" value="Expressed in midline primordium (Drosophila) and 42 other cell types or tissues"/>
</dbReference>
<dbReference type="GO" id="GO:0090575">
    <property type="term" value="C:RNA polymerase II transcription regulator complex"/>
    <property type="evidence" value="ECO:0000318"/>
    <property type="project" value="GO_Central"/>
</dbReference>
<dbReference type="GO" id="GO:0005667">
    <property type="term" value="C:transcription regulator complex"/>
    <property type="evidence" value="ECO:0000353"/>
    <property type="project" value="FlyBase"/>
</dbReference>
<dbReference type="GO" id="GO:0000981">
    <property type="term" value="F:DNA-binding transcription factor activity, RNA polymerase II-specific"/>
    <property type="evidence" value="ECO:0000318"/>
    <property type="project" value="GO_Central"/>
</dbReference>
<dbReference type="GO" id="GO:0046982">
    <property type="term" value="F:protein heterodimerization activity"/>
    <property type="evidence" value="ECO:0000353"/>
    <property type="project" value="FlyBase"/>
</dbReference>
<dbReference type="GO" id="GO:0043565">
    <property type="term" value="F:sequence-specific DNA binding"/>
    <property type="evidence" value="ECO:0000314"/>
    <property type="project" value="FlyBase"/>
</dbReference>
<dbReference type="GO" id="GO:0007417">
    <property type="term" value="P:central nervous system development"/>
    <property type="evidence" value="ECO:0000303"/>
    <property type="project" value="FlyBase"/>
</dbReference>
<dbReference type="GO" id="GO:0061331">
    <property type="term" value="P:epithelial cell proliferation involved in Malpighian tubule morphogenesis"/>
    <property type="evidence" value="ECO:0000315"/>
    <property type="project" value="FlyBase"/>
</dbReference>
<dbReference type="GO" id="GO:0061382">
    <property type="term" value="P:Malpighian tubule tip cell differentiation"/>
    <property type="evidence" value="ECO:0000315"/>
    <property type="project" value="FlyBase"/>
</dbReference>
<dbReference type="GO" id="GO:0007400">
    <property type="term" value="P:neuroblast fate determination"/>
    <property type="evidence" value="ECO:0000315"/>
    <property type="project" value="FlyBase"/>
</dbReference>
<dbReference type="GO" id="GO:0030182">
    <property type="term" value="P:neuron differentiation"/>
    <property type="evidence" value="ECO:0000318"/>
    <property type="project" value="GO_Central"/>
</dbReference>
<dbReference type="GO" id="GO:0007422">
    <property type="term" value="P:peripheral nervous system development"/>
    <property type="evidence" value="ECO:0000303"/>
    <property type="project" value="FlyBase"/>
</dbReference>
<dbReference type="GO" id="GO:0045893">
    <property type="term" value="P:positive regulation of DNA-templated transcription"/>
    <property type="evidence" value="ECO:0000314"/>
    <property type="project" value="FlyBase"/>
</dbReference>
<dbReference type="GO" id="GO:0045944">
    <property type="term" value="P:positive regulation of transcription by RNA polymerase II"/>
    <property type="evidence" value="ECO:0000315"/>
    <property type="project" value="FlyBase"/>
</dbReference>
<dbReference type="GO" id="GO:0050767">
    <property type="term" value="P:regulation of neurogenesis"/>
    <property type="evidence" value="ECO:0000318"/>
    <property type="project" value="GO_Central"/>
</dbReference>
<dbReference type="GO" id="GO:0007423">
    <property type="term" value="P:sensory organ development"/>
    <property type="evidence" value="ECO:0000318"/>
    <property type="project" value="GO_Central"/>
</dbReference>
<dbReference type="GO" id="GO:0007419">
    <property type="term" value="P:ventral cord development"/>
    <property type="evidence" value="ECO:0000304"/>
    <property type="project" value="FlyBase"/>
</dbReference>
<dbReference type="CDD" id="cd19744">
    <property type="entry name" value="bHLH_TS_dAS-C_like"/>
    <property type="match status" value="1"/>
</dbReference>
<dbReference type="FunFam" id="4.10.280.10:FF:000060">
    <property type="entry name" value="Scute protein"/>
    <property type="match status" value="1"/>
</dbReference>
<dbReference type="Gene3D" id="4.10.280.10">
    <property type="entry name" value="Helix-loop-helix DNA-binding domain"/>
    <property type="match status" value="1"/>
</dbReference>
<dbReference type="InterPro" id="IPR011598">
    <property type="entry name" value="bHLH_dom"/>
</dbReference>
<dbReference type="InterPro" id="IPR050283">
    <property type="entry name" value="E-box_TF_Regulators"/>
</dbReference>
<dbReference type="InterPro" id="IPR036638">
    <property type="entry name" value="HLH_DNA-bd_sf"/>
</dbReference>
<dbReference type="PANTHER" id="PTHR23349">
    <property type="entry name" value="BASIC HELIX-LOOP-HELIX TRANSCRIPTION FACTOR, TWIST"/>
    <property type="match status" value="1"/>
</dbReference>
<dbReference type="PANTHER" id="PTHR23349:SF108">
    <property type="entry name" value="BHLH DOMAIN-CONTAINING PROTEIN"/>
    <property type="match status" value="1"/>
</dbReference>
<dbReference type="Pfam" id="PF00010">
    <property type="entry name" value="HLH"/>
    <property type="match status" value="1"/>
</dbReference>
<dbReference type="SMART" id="SM00353">
    <property type="entry name" value="HLH"/>
    <property type="match status" value="1"/>
</dbReference>
<dbReference type="SUPFAM" id="SSF47459">
    <property type="entry name" value="HLH, helix-loop-helix DNA-binding domain"/>
    <property type="match status" value="1"/>
</dbReference>
<dbReference type="PROSITE" id="PS50888">
    <property type="entry name" value="BHLH"/>
    <property type="match status" value="1"/>
</dbReference>
<evidence type="ECO:0000255" key="1">
    <source>
        <dbReference type="PROSITE-ProRule" id="PRU00981"/>
    </source>
</evidence>
<evidence type="ECO:0000256" key="2">
    <source>
        <dbReference type="SAM" id="MobiDB-lite"/>
    </source>
</evidence>
<evidence type="ECO:0000305" key="3"/>
<comment type="function">
    <text>AS-C proteins are involved in the determination of the neuronal precursors in the peripheral nervous system and the central nervous system.</text>
</comment>
<comment type="subunit">
    <text>Efficient DNA binding requires dimerization with another bHLH protein.</text>
</comment>
<comment type="tissue specificity">
    <text>L(1)SC, SC and AC strongly label the presumptive stomatogastric nervous system, while ASE is more prominent in the presumptive procephalic lobe.</text>
</comment>
<comment type="miscellaneous">
    <text>AS-C proteins are expressed first earlier in ectoderm and then in the internalized neuroblasts, while T8 is expressed in presumptive neural precursors, once they have segregated from the ectoderm.</text>
</comment>
<proteinExistence type="evidence at transcript level"/>
<organism>
    <name type="scientific">Drosophila melanogaster</name>
    <name type="common">Fruit fly</name>
    <dbReference type="NCBI Taxonomy" id="7227"/>
    <lineage>
        <taxon>Eukaryota</taxon>
        <taxon>Metazoa</taxon>
        <taxon>Ecdysozoa</taxon>
        <taxon>Arthropoda</taxon>
        <taxon>Hexapoda</taxon>
        <taxon>Insecta</taxon>
        <taxon>Pterygota</taxon>
        <taxon>Neoptera</taxon>
        <taxon>Endopterygota</taxon>
        <taxon>Diptera</taxon>
        <taxon>Brachycera</taxon>
        <taxon>Muscomorpha</taxon>
        <taxon>Ephydroidea</taxon>
        <taxon>Drosophilidae</taxon>
        <taxon>Drosophila</taxon>
        <taxon>Sophophora</taxon>
    </lineage>
</organism>
<keyword id="KW-0217">Developmental protein</keyword>
<keyword id="KW-0221">Differentiation</keyword>
<keyword id="KW-0238">DNA-binding</keyword>
<keyword id="KW-0524">Neurogenesis</keyword>
<keyword id="KW-1185">Reference proteome</keyword>
<reference key="1">
    <citation type="journal article" date="1988" name="EMBO J.">
        <title>The achaete-scute gene complex of Drosophila melanogaster comprises four homologous genes.</title>
        <authorList>
            <person name="Alonso M.C."/>
            <person name="Cabrera C.V."/>
        </authorList>
    </citation>
    <scope>NUCLEOTIDE SEQUENCE [GENOMIC DNA / MRNA]</scope>
    <source>
        <strain>Canton-S</strain>
    </source>
</reference>
<reference key="2">
    <citation type="journal article" date="1993" name="Development">
        <title>Molecular characterization of the lethal of scute genetic function.</title>
        <authorList>
            <person name="Martin-Bermudo M.D."/>
            <person name="Gonzalez F."/>
            <person name="Dominguez M."/>
            <person name="Rodriguez I."/>
            <person name="Ruiz-Gomez M."/>
            <person name="Romani S."/>
            <person name="Modolell J."/>
            <person name="Jimenez F."/>
        </authorList>
    </citation>
    <scope>NUCLEOTIDE SEQUENCE [GENOMIC DNA]</scope>
    <source>
        <strain>Canton-S</strain>
        <tissue>Embryo</tissue>
    </source>
</reference>
<reference key="3">
    <citation type="journal article" date="2000" name="Science">
        <title>The genome sequence of Drosophila melanogaster.</title>
        <authorList>
            <person name="Adams M.D."/>
            <person name="Celniker S.E."/>
            <person name="Holt R.A."/>
            <person name="Evans C.A."/>
            <person name="Gocayne J.D."/>
            <person name="Amanatides P.G."/>
            <person name="Scherer S.E."/>
            <person name="Li P.W."/>
            <person name="Hoskins R.A."/>
            <person name="Galle R.F."/>
            <person name="George R.A."/>
            <person name="Lewis S.E."/>
            <person name="Richards S."/>
            <person name="Ashburner M."/>
            <person name="Henderson S.N."/>
            <person name="Sutton G.G."/>
            <person name="Wortman J.R."/>
            <person name="Yandell M.D."/>
            <person name="Zhang Q."/>
            <person name="Chen L.X."/>
            <person name="Brandon R.C."/>
            <person name="Rogers Y.-H.C."/>
            <person name="Blazej R.G."/>
            <person name="Champe M."/>
            <person name="Pfeiffer B.D."/>
            <person name="Wan K.H."/>
            <person name="Doyle C."/>
            <person name="Baxter E.G."/>
            <person name="Helt G."/>
            <person name="Nelson C.R."/>
            <person name="Miklos G.L.G."/>
            <person name="Abril J.F."/>
            <person name="Agbayani A."/>
            <person name="An H.-J."/>
            <person name="Andrews-Pfannkoch C."/>
            <person name="Baldwin D."/>
            <person name="Ballew R.M."/>
            <person name="Basu A."/>
            <person name="Baxendale J."/>
            <person name="Bayraktaroglu L."/>
            <person name="Beasley E.M."/>
            <person name="Beeson K.Y."/>
            <person name="Benos P.V."/>
            <person name="Berman B.P."/>
            <person name="Bhandari D."/>
            <person name="Bolshakov S."/>
            <person name="Borkova D."/>
            <person name="Botchan M.R."/>
            <person name="Bouck J."/>
            <person name="Brokstein P."/>
            <person name="Brottier P."/>
            <person name="Burtis K.C."/>
            <person name="Busam D.A."/>
            <person name="Butler H."/>
            <person name="Cadieu E."/>
            <person name="Center A."/>
            <person name="Chandra I."/>
            <person name="Cherry J.M."/>
            <person name="Cawley S."/>
            <person name="Dahlke C."/>
            <person name="Davenport L.B."/>
            <person name="Davies P."/>
            <person name="de Pablos B."/>
            <person name="Delcher A."/>
            <person name="Deng Z."/>
            <person name="Mays A.D."/>
            <person name="Dew I."/>
            <person name="Dietz S.M."/>
            <person name="Dodson K."/>
            <person name="Doup L.E."/>
            <person name="Downes M."/>
            <person name="Dugan-Rocha S."/>
            <person name="Dunkov B.C."/>
            <person name="Dunn P."/>
            <person name="Durbin K.J."/>
            <person name="Evangelista C.C."/>
            <person name="Ferraz C."/>
            <person name="Ferriera S."/>
            <person name="Fleischmann W."/>
            <person name="Fosler C."/>
            <person name="Gabrielian A.E."/>
            <person name="Garg N.S."/>
            <person name="Gelbart W.M."/>
            <person name="Glasser K."/>
            <person name="Glodek A."/>
            <person name="Gong F."/>
            <person name="Gorrell J.H."/>
            <person name="Gu Z."/>
            <person name="Guan P."/>
            <person name="Harris M."/>
            <person name="Harris N.L."/>
            <person name="Harvey D.A."/>
            <person name="Heiman T.J."/>
            <person name="Hernandez J.R."/>
            <person name="Houck J."/>
            <person name="Hostin D."/>
            <person name="Houston K.A."/>
            <person name="Howland T.J."/>
            <person name="Wei M.-H."/>
            <person name="Ibegwam C."/>
            <person name="Jalali M."/>
            <person name="Kalush F."/>
            <person name="Karpen G.H."/>
            <person name="Ke Z."/>
            <person name="Kennison J.A."/>
            <person name="Ketchum K.A."/>
            <person name="Kimmel B.E."/>
            <person name="Kodira C.D."/>
            <person name="Kraft C.L."/>
            <person name="Kravitz S."/>
            <person name="Kulp D."/>
            <person name="Lai Z."/>
            <person name="Lasko P."/>
            <person name="Lei Y."/>
            <person name="Levitsky A.A."/>
            <person name="Li J.H."/>
            <person name="Li Z."/>
            <person name="Liang Y."/>
            <person name="Lin X."/>
            <person name="Liu X."/>
            <person name="Mattei B."/>
            <person name="McIntosh T.C."/>
            <person name="McLeod M.P."/>
            <person name="McPherson D."/>
            <person name="Merkulov G."/>
            <person name="Milshina N.V."/>
            <person name="Mobarry C."/>
            <person name="Morris J."/>
            <person name="Moshrefi A."/>
            <person name="Mount S.M."/>
            <person name="Moy M."/>
            <person name="Murphy B."/>
            <person name="Murphy L."/>
            <person name="Muzny D.M."/>
            <person name="Nelson D.L."/>
            <person name="Nelson D.R."/>
            <person name="Nelson K.A."/>
            <person name="Nixon K."/>
            <person name="Nusskern D.R."/>
            <person name="Pacleb J.M."/>
            <person name="Palazzolo M."/>
            <person name="Pittman G.S."/>
            <person name="Pan S."/>
            <person name="Pollard J."/>
            <person name="Puri V."/>
            <person name="Reese M.G."/>
            <person name="Reinert K."/>
            <person name="Remington K."/>
            <person name="Saunders R.D.C."/>
            <person name="Scheeler F."/>
            <person name="Shen H."/>
            <person name="Shue B.C."/>
            <person name="Siden-Kiamos I."/>
            <person name="Simpson M."/>
            <person name="Skupski M.P."/>
            <person name="Smith T.J."/>
            <person name="Spier E."/>
            <person name="Spradling A.C."/>
            <person name="Stapleton M."/>
            <person name="Strong R."/>
            <person name="Sun E."/>
            <person name="Svirskas R."/>
            <person name="Tector C."/>
            <person name="Turner R."/>
            <person name="Venter E."/>
            <person name="Wang A.H."/>
            <person name="Wang X."/>
            <person name="Wang Z.-Y."/>
            <person name="Wassarman D.A."/>
            <person name="Weinstock G.M."/>
            <person name="Weissenbach J."/>
            <person name="Williams S.M."/>
            <person name="Woodage T."/>
            <person name="Worley K.C."/>
            <person name="Wu D."/>
            <person name="Yang S."/>
            <person name="Yao Q.A."/>
            <person name="Ye J."/>
            <person name="Yeh R.-F."/>
            <person name="Zaveri J.S."/>
            <person name="Zhan M."/>
            <person name="Zhang G."/>
            <person name="Zhao Q."/>
            <person name="Zheng L."/>
            <person name="Zheng X.H."/>
            <person name="Zhong F.N."/>
            <person name="Zhong W."/>
            <person name="Zhou X."/>
            <person name="Zhu S.C."/>
            <person name="Zhu X."/>
            <person name="Smith H.O."/>
            <person name="Gibbs R.A."/>
            <person name="Myers E.W."/>
            <person name="Rubin G.M."/>
            <person name="Venter J.C."/>
        </authorList>
    </citation>
    <scope>NUCLEOTIDE SEQUENCE [LARGE SCALE GENOMIC DNA]</scope>
    <source>
        <strain>Berkeley</strain>
    </source>
</reference>
<reference key="4">
    <citation type="journal article" date="2002" name="Genome Biol.">
        <title>Annotation of the Drosophila melanogaster euchromatic genome: a systematic review.</title>
        <authorList>
            <person name="Misra S."/>
            <person name="Crosby M.A."/>
            <person name="Mungall C.J."/>
            <person name="Matthews B.B."/>
            <person name="Campbell K.S."/>
            <person name="Hradecky P."/>
            <person name="Huang Y."/>
            <person name="Kaminker J.S."/>
            <person name="Millburn G.H."/>
            <person name="Prochnik S.E."/>
            <person name="Smith C.D."/>
            <person name="Tupy J.L."/>
            <person name="Whitfield E.J."/>
            <person name="Bayraktaroglu L."/>
            <person name="Berman B.P."/>
            <person name="Bettencourt B.R."/>
            <person name="Celniker S.E."/>
            <person name="de Grey A.D.N.J."/>
            <person name="Drysdale R.A."/>
            <person name="Harris N.L."/>
            <person name="Richter J."/>
            <person name="Russo S."/>
            <person name="Schroeder A.J."/>
            <person name="Shu S.Q."/>
            <person name="Stapleton M."/>
            <person name="Yamada C."/>
            <person name="Ashburner M."/>
            <person name="Gelbart W.M."/>
            <person name="Rubin G.M."/>
            <person name="Lewis S.E."/>
        </authorList>
    </citation>
    <scope>GENOME REANNOTATION</scope>
    <source>
        <strain>Berkeley</strain>
    </source>
</reference>
<reference key="5">
    <citation type="journal article" date="2000" name="Science">
        <title>From sequence to chromosome: the tip of the X chromosome of D. melanogaster.</title>
        <authorList>
            <person name="Benos P.V."/>
            <person name="Gatt M.K."/>
            <person name="Ashburner M."/>
            <person name="Murphy L."/>
            <person name="Harris D."/>
            <person name="Barrell B.G."/>
            <person name="Ferraz C."/>
            <person name="Vidal S."/>
            <person name="Brun C."/>
            <person name="Demailles J."/>
            <person name="Cadieu E."/>
            <person name="Dreano S."/>
            <person name="Gloux S."/>
            <person name="Lelaure V."/>
            <person name="Mottier S."/>
            <person name="Galibert F."/>
            <person name="Borkova D."/>
            <person name="Minana B."/>
            <person name="Kafatos F.C."/>
            <person name="Louis C."/>
            <person name="Siden-Kiamos I."/>
            <person name="Bolshakov S."/>
            <person name="Papagiannakis G."/>
            <person name="Spanos L."/>
            <person name="Cox S."/>
            <person name="Madueno E."/>
            <person name="de Pablos B."/>
            <person name="Modolell J."/>
            <person name="Peter A."/>
            <person name="Schoettler P."/>
            <person name="Werner M."/>
            <person name="Mourkioti F."/>
            <person name="Beinert N."/>
            <person name="Dowe G."/>
            <person name="Schaefer U."/>
            <person name="Jaeckle H."/>
            <person name="Bucheton A."/>
            <person name="Callister D.M."/>
            <person name="Campbell L.A."/>
            <person name="Darlamitsou A."/>
            <person name="Henderson N.S."/>
            <person name="McMillan P.J."/>
            <person name="Salles C."/>
            <person name="Tait E.A."/>
            <person name="Valenti P."/>
            <person name="Saunders R.D.C."/>
            <person name="Glover D.M."/>
        </authorList>
    </citation>
    <scope>NUCLEOTIDE SEQUENCE [LARGE SCALE GENOMIC DNA]</scope>
    <source>
        <strain>Oregon-R</strain>
    </source>
</reference>
<reference key="6">
    <citation type="journal article" date="2002" name="Genome Biol.">
        <title>A Drosophila full-length cDNA resource.</title>
        <authorList>
            <person name="Stapleton M."/>
            <person name="Carlson J.W."/>
            <person name="Brokstein P."/>
            <person name="Yu C."/>
            <person name="Champe M."/>
            <person name="George R.A."/>
            <person name="Guarin H."/>
            <person name="Kronmiller B."/>
            <person name="Pacleb J.M."/>
            <person name="Park S."/>
            <person name="Wan K.H."/>
            <person name="Rubin G.M."/>
            <person name="Celniker S.E."/>
        </authorList>
    </citation>
    <scope>NUCLEOTIDE SEQUENCE [LARGE SCALE MRNA]</scope>
    <source>
        <strain>Berkeley</strain>
        <tissue>Embryo</tissue>
    </source>
</reference>
<name>AST3_DROME</name>
<sequence>MTSICSSKFQQQHYQLTNSNIFLLQHQHHHQTQQHQLIAPKIPLGTSQLQNMQQSQQSNVGPMLSSQKKKFNYNNMPYGEQLPSVARRNARERNRVKQVNNGFVNLRQHLPQTVVNSLSNGGRGSSKKLSKVDTLRIAVEYIRGLQDMLDDGTASSTRHIYNSADESSNDGSSYNDYNDSLDSSQQFLTGATQSAQSHSYHSASPTPSYSGSEISGGGYIKQELQEQDLKFDSFDSFSDEQPDDEELLDYISSWQEQ</sequence>
<protein>
    <recommendedName>
        <fullName>Achaete-scute complex protein T3</fullName>
    </recommendedName>
    <alternativeName>
        <fullName>Protein lethal of scute</fullName>
        <shortName>Lethal of sc</shortName>
    </alternativeName>
</protein>
<accession>P09774</accession>
<accession>Q24387</accession>
<accession>Q8MRA5</accession>
<gene>
    <name type="primary">l(1)sc</name>
    <name type="synonym">l'sc</name>
    <name type="synonym">T3</name>
    <name type="ORF">CG3839</name>
</gene>